<dbReference type="EMBL" id="BX950229">
    <property type="protein sequence ID" value="CAF30602.1"/>
    <property type="molecule type" value="Genomic_DNA"/>
</dbReference>
<dbReference type="RefSeq" id="WP_011170990.1">
    <property type="nucleotide sequence ID" value="NC_005791.1"/>
</dbReference>
<dbReference type="SMR" id="Q6LYE5"/>
<dbReference type="STRING" id="267377.MMP1046"/>
<dbReference type="EnsemblBacteria" id="CAF30602">
    <property type="protein sequence ID" value="CAF30602"/>
    <property type="gene ID" value="MMP1046"/>
</dbReference>
<dbReference type="GeneID" id="10982625"/>
<dbReference type="KEGG" id="mmp:MMP1046"/>
<dbReference type="PATRIC" id="fig|267377.15.peg.1078"/>
<dbReference type="eggNOG" id="arCOG04101">
    <property type="taxonomic scope" value="Archaea"/>
</dbReference>
<dbReference type="HOGENOM" id="CLU_069688_2_1_2"/>
<dbReference type="OrthoDB" id="117390at2157"/>
<dbReference type="Proteomes" id="UP000000590">
    <property type="component" value="Chromosome"/>
</dbReference>
<dbReference type="GO" id="GO:0005886">
    <property type="term" value="C:plasma membrane"/>
    <property type="evidence" value="ECO:0007669"/>
    <property type="project" value="UniProtKB-SubCell"/>
</dbReference>
<dbReference type="GO" id="GO:0005524">
    <property type="term" value="F:ATP binding"/>
    <property type="evidence" value="ECO:0007669"/>
    <property type="project" value="UniProtKB-UniRule"/>
</dbReference>
<dbReference type="GO" id="GO:0046933">
    <property type="term" value="F:proton-transporting ATP synthase activity, rotational mechanism"/>
    <property type="evidence" value="ECO:0007669"/>
    <property type="project" value="UniProtKB-UniRule"/>
</dbReference>
<dbReference type="GO" id="GO:0046961">
    <property type="term" value="F:proton-transporting ATPase activity, rotational mechanism"/>
    <property type="evidence" value="ECO:0007669"/>
    <property type="project" value="InterPro"/>
</dbReference>
<dbReference type="GO" id="GO:0042777">
    <property type="term" value="P:proton motive force-driven plasma membrane ATP synthesis"/>
    <property type="evidence" value="ECO:0007669"/>
    <property type="project" value="UniProtKB-UniRule"/>
</dbReference>
<dbReference type="FunFam" id="1.10.287.3240:FF:000007">
    <property type="entry name" value="V-type ATP synthase subunit D"/>
    <property type="match status" value="1"/>
</dbReference>
<dbReference type="Gene3D" id="1.10.287.3240">
    <property type="match status" value="1"/>
</dbReference>
<dbReference type="HAMAP" id="MF_00271">
    <property type="entry name" value="ATP_synth_D_arch"/>
    <property type="match status" value="1"/>
</dbReference>
<dbReference type="InterPro" id="IPR002699">
    <property type="entry name" value="V_ATPase_D"/>
</dbReference>
<dbReference type="NCBIfam" id="NF001545">
    <property type="entry name" value="PRK00373.1-4"/>
    <property type="match status" value="1"/>
</dbReference>
<dbReference type="NCBIfam" id="TIGR00309">
    <property type="entry name" value="V_ATPase_subD"/>
    <property type="match status" value="1"/>
</dbReference>
<dbReference type="PANTHER" id="PTHR11671">
    <property type="entry name" value="V-TYPE ATP SYNTHASE SUBUNIT D"/>
    <property type="match status" value="1"/>
</dbReference>
<dbReference type="Pfam" id="PF01813">
    <property type="entry name" value="ATP-synt_D"/>
    <property type="match status" value="1"/>
</dbReference>
<comment type="function">
    <text evidence="1">Component of the A-type ATP synthase that produces ATP from ADP in the presence of a proton gradient across the membrane.</text>
</comment>
<comment type="subunit">
    <text evidence="1">Has multiple subunits with at least A(3), B(3), C, D, E, F, H, I and proteolipid K(x).</text>
</comment>
<comment type="subcellular location">
    <subcellularLocation>
        <location evidence="1">Cell membrane</location>
        <topology evidence="1">Peripheral membrane protein</topology>
    </subcellularLocation>
</comment>
<comment type="similarity">
    <text evidence="1">Belongs to the V-ATPase D subunit family.</text>
</comment>
<protein>
    <recommendedName>
        <fullName evidence="1">A-type ATP synthase subunit D</fullName>
    </recommendedName>
</protein>
<sequence>MADVNPTRMELLKLKGKIKLAEKGHKLLKQKRDALMMEFFEILDQASGIRDKVNDALSQAYKDLIMAQAVMGTLSVKEASFAAKNNDIDLDVDMRNIMGIDVPVFEISNVKRDISTRGYSPYGVSSKLDEAAKNFEEALELITELAEIETSIKLLAQEIITTKRRVNALEYVVIPKMNETKKYIAMRLEEMERENFFRLKIIKARMDAKEAEEA</sequence>
<gene>
    <name evidence="1" type="primary">atpD</name>
    <name type="ordered locus">MMP1046</name>
</gene>
<proteinExistence type="inferred from homology"/>
<keyword id="KW-0066">ATP synthesis</keyword>
<keyword id="KW-1003">Cell membrane</keyword>
<keyword id="KW-0375">Hydrogen ion transport</keyword>
<keyword id="KW-0406">Ion transport</keyword>
<keyword id="KW-0472">Membrane</keyword>
<keyword id="KW-1185">Reference proteome</keyword>
<keyword id="KW-0813">Transport</keyword>
<reference key="1">
    <citation type="journal article" date="2004" name="J. Bacteriol.">
        <title>Complete genome sequence of the genetically tractable hydrogenotrophic methanogen Methanococcus maripaludis.</title>
        <authorList>
            <person name="Hendrickson E.L."/>
            <person name="Kaul R."/>
            <person name="Zhou Y."/>
            <person name="Bovee D."/>
            <person name="Chapman P."/>
            <person name="Chung J."/>
            <person name="Conway de Macario E."/>
            <person name="Dodsworth J.A."/>
            <person name="Gillett W."/>
            <person name="Graham D.E."/>
            <person name="Hackett M."/>
            <person name="Haydock A.K."/>
            <person name="Kang A."/>
            <person name="Land M.L."/>
            <person name="Levy R."/>
            <person name="Lie T.J."/>
            <person name="Major T.A."/>
            <person name="Moore B.C."/>
            <person name="Porat I."/>
            <person name="Palmeiri A."/>
            <person name="Rouse G."/>
            <person name="Saenphimmachak C."/>
            <person name="Soell D."/>
            <person name="Van Dien S."/>
            <person name="Wang T."/>
            <person name="Whitman W.B."/>
            <person name="Xia Q."/>
            <person name="Zhang Y."/>
            <person name="Larimer F.W."/>
            <person name="Olson M.V."/>
            <person name="Leigh J.A."/>
        </authorList>
    </citation>
    <scope>NUCLEOTIDE SEQUENCE [LARGE SCALE GENOMIC DNA]</scope>
    <source>
        <strain>DSM 14266 / JCM 13030 / NBRC 101832 / S2 / LL</strain>
    </source>
</reference>
<accession>Q6LYE5</accession>
<evidence type="ECO:0000255" key="1">
    <source>
        <dbReference type="HAMAP-Rule" id="MF_00271"/>
    </source>
</evidence>
<name>AATD_METMP</name>
<organism>
    <name type="scientific">Methanococcus maripaludis (strain DSM 14266 / JCM 13030 / NBRC 101832 / S2 / LL)</name>
    <dbReference type="NCBI Taxonomy" id="267377"/>
    <lineage>
        <taxon>Archaea</taxon>
        <taxon>Methanobacteriati</taxon>
        <taxon>Methanobacteriota</taxon>
        <taxon>Methanomada group</taxon>
        <taxon>Methanococci</taxon>
        <taxon>Methanococcales</taxon>
        <taxon>Methanococcaceae</taxon>
        <taxon>Methanococcus</taxon>
    </lineage>
</organism>
<feature type="chain" id="PRO_1000059166" description="A-type ATP synthase subunit D">
    <location>
        <begin position="1"/>
        <end position="214"/>
    </location>
</feature>